<evidence type="ECO:0000250" key="1">
    <source>
        <dbReference type="UniProtKB" id="A0A1S4F1Z7"/>
    </source>
</evidence>
<evidence type="ECO:0000255" key="2"/>
<evidence type="ECO:0000255" key="3">
    <source>
        <dbReference type="PROSITE-ProRule" id="PRU00040"/>
    </source>
</evidence>
<evidence type="ECO:0000255" key="4">
    <source>
        <dbReference type="PROSITE-ProRule" id="PRU00498"/>
    </source>
</evidence>
<evidence type="ECO:0000269" key="5">
    <source>
    </source>
</evidence>
<evidence type="ECO:0000303" key="6">
    <source>
    </source>
</evidence>
<evidence type="ECO:0000305" key="7"/>
<evidence type="ECO:0000312" key="8">
    <source>
        <dbReference type="EMBL" id="EDS34080.1"/>
    </source>
</evidence>
<proteinExistence type="inferred from homology"/>
<protein>
    <recommendedName>
        <fullName evidence="7">C-type lectin mosGCTL-7</fullName>
    </recommendedName>
    <alternativeName>
        <fullName evidence="8">Galactose-specific C-type lectin</fullName>
        <shortName evidence="6">mosGCTL-7</shortName>
    </alternativeName>
</protein>
<reference evidence="8" key="1">
    <citation type="submission" date="2007-03" db="EMBL/GenBank/DDBJ databases">
        <title>Annotation of Culex pipiens quinquefasciatus.</title>
        <authorList>
            <consortium name="The Broad Institute Genome Sequencing Platform"/>
            <person name="Atkinson P.W."/>
            <person name="Hemingway J."/>
            <person name="Christensen B.M."/>
            <person name="Higgs S."/>
            <person name="Kodira C."/>
            <person name="Hannick L."/>
            <person name="Megy K."/>
            <person name="O'Leary S."/>
            <person name="Pearson M."/>
            <person name="Haas B.J."/>
            <person name="Mauceli E."/>
            <person name="Wortman J.R."/>
            <person name="Lee N.H."/>
            <person name="Guigo R."/>
            <person name="Stanke M."/>
            <person name="Alvarado L."/>
            <person name="Amedeo P."/>
            <person name="Antoine C.H."/>
            <person name="Arensburger P."/>
            <person name="Bidwell S.L."/>
            <person name="Crawford M."/>
            <person name="Camaro F."/>
            <person name="Devon K."/>
            <person name="Engels R."/>
            <person name="Hammond M."/>
            <person name="Howarth C."/>
            <person name="Koehrsen M."/>
            <person name="Lawson D."/>
            <person name="Montgomery P."/>
            <person name="Nene V."/>
            <person name="Nusbaum C."/>
            <person name="Puiu D."/>
            <person name="Romero-Severson J."/>
            <person name="Severson D.W."/>
            <person name="Shumway M."/>
            <person name="Sisk P."/>
            <person name="Stolte C."/>
            <person name="Zeng Q."/>
            <person name="Eisenstadt E."/>
            <person name="Fraser-Liggett C."/>
            <person name="Strausberg R."/>
            <person name="Galagan J."/>
            <person name="Birren B."/>
            <person name="Collins F.H."/>
        </authorList>
    </citation>
    <scope>NUCLEOTIDE SEQUENCE [LARGE SCALE GENOMIC DNA]</scope>
    <source>
        <strain evidence="8">JHB</strain>
    </source>
</reference>
<reference evidence="7" key="2">
    <citation type="journal article" date="2017" name="J. Virol.">
        <title>mosGCTL-7, a C-Type Lectin Protein, Mediates Japanese Encephalitis Virus Infection in Mosquitoes.</title>
        <authorList>
            <person name="Liu K."/>
            <person name="Qian Y."/>
            <person name="Jung Y.S."/>
            <person name="Zhou B."/>
            <person name="Cao R."/>
            <person name="Shen T."/>
            <person name="Shao D."/>
            <person name="Wei J."/>
            <person name="Ma Z."/>
            <person name="Chen P."/>
            <person name="Zhu H."/>
            <person name="Qiu Y."/>
        </authorList>
    </citation>
    <scope>FUNCTION (MICROBIAL INFECTION)</scope>
    <scope>DISRUPTION PHENOTYPE (MICROBIAL INFECTION)</scope>
</reference>
<organism>
    <name type="scientific">Culex quinquefasciatus</name>
    <name type="common">Southern house mosquito</name>
    <name type="synonym">Culex pungens</name>
    <dbReference type="NCBI Taxonomy" id="7176"/>
    <lineage>
        <taxon>Eukaryota</taxon>
        <taxon>Metazoa</taxon>
        <taxon>Ecdysozoa</taxon>
        <taxon>Arthropoda</taxon>
        <taxon>Hexapoda</taxon>
        <taxon>Insecta</taxon>
        <taxon>Pterygota</taxon>
        <taxon>Neoptera</taxon>
        <taxon>Endopterygota</taxon>
        <taxon>Diptera</taxon>
        <taxon>Nematocera</taxon>
        <taxon>Culicoidea</taxon>
        <taxon>Culicidae</taxon>
        <taxon>Culicinae</taxon>
        <taxon>Culicini</taxon>
        <taxon>Culex</taxon>
        <taxon>Culex</taxon>
    </lineage>
</organism>
<dbReference type="EMBL" id="DS232077">
    <property type="protein sequence ID" value="EDS34080.1"/>
    <property type="molecule type" value="Genomic_DNA"/>
</dbReference>
<dbReference type="RefSeq" id="XP_001853479.1">
    <property type="nucleotide sequence ID" value="XM_001853430.1"/>
</dbReference>
<dbReference type="SMR" id="B0WSV2"/>
<dbReference type="FunCoup" id="B0WSV2">
    <property type="interactions" value="5"/>
</dbReference>
<dbReference type="STRING" id="7176.B0WSV2"/>
<dbReference type="EnsemblMetazoa" id="CPIJ009922-RA">
    <property type="protein sequence ID" value="CPIJ009922-PA"/>
    <property type="gene ID" value="CPIJ009922"/>
</dbReference>
<dbReference type="KEGG" id="cqu:CpipJ_CPIJ009922"/>
<dbReference type="VEuPathDB" id="VectorBase:CPIJ009922"/>
<dbReference type="VEuPathDB" id="VectorBase:CQUJHB014682"/>
<dbReference type="eggNOG" id="KOG4297">
    <property type="taxonomic scope" value="Eukaryota"/>
</dbReference>
<dbReference type="HOGENOM" id="CLU_049894_10_0_1"/>
<dbReference type="InParanoid" id="B0WSV2"/>
<dbReference type="OMA" id="KWIVVNC"/>
<dbReference type="OrthoDB" id="418245at2759"/>
<dbReference type="Proteomes" id="UP000002320">
    <property type="component" value="Unassembled WGS sequence"/>
</dbReference>
<dbReference type="GO" id="GO:0005576">
    <property type="term" value="C:extracellular region"/>
    <property type="evidence" value="ECO:0007669"/>
    <property type="project" value="UniProtKB-SubCell"/>
</dbReference>
<dbReference type="GO" id="GO:0030246">
    <property type="term" value="F:carbohydrate binding"/>
    <property type="evidence" value="ECO:0007669"/>
    <property type="project" value="UniProtKB-KW"/>
</dbReference>
<dbReference type="CDD" id="cd00037">
    <property type="entry name" value="CLECT"/>
    <property type="match status" value="1"/>
</dbReference>
<dbReference type="Gene3D" id="3.10.100.10">
    <property type="entry name" value="Mannose-Binding Protein A, subunit A"/>
    <property type="match status" value="1"/>
</dbReference>
<dbReference type="InterPro" id="IPR001304">
    <property type="entry name" value="C-type_lectin-like"/>
</dbReference>
<dbReference type="InterPro" id="IPR016186">
    <property type="entry name" value="C-type_lectin-like/link_sf"/>
</dbReference>
<dbReference type="InterPro" id="IPR016187">
    <property type="entry name" value="CTDL_fold"/>
</dbReference>
<dbReference type="InterPro" id="IPR051004">
    <property type="entry name" value="DC-SIGN_domain-containing"/>
</dbReference>
<dbReference type="PANTHER" id="PTHR22802:SF465">
    <property type="entry name" value="AT17652P-RELATED"/>
    <property type="match status" value="1"/>
</dbReference>
<dbReference type="PANTHER" id="PTHR22802">
    <property type="entry name" value="C-TYPE LECTIN SUPERFAMILY MEMBER"/>
    <property type="match status" value="1"/>
</dbReference>
<dbReference type="Pfam" id="PF00059">
    <property type="entry name" value="Lectin_C"/>
    <property type="match status" value="1"/>
</dbReference>
<dbReference type="SMART" id="SM00034">
    <property type="entry name" value="CLECT"/>
    <property type="match status" value="1"/>
</dbReference>
<dbReference type="SUPFAM" id="SSF56436">
    <property type="entry name" value="C-type lectin-like"/>
    <property type="match status" value="1"/>
</dbReference>
<dbReference type="PROSITE" id="PS50041">
    <property type="entry name" value="C_TYPE_LECTIN_2"/>
    <property type="match status" value="1"/>
</dbReference>
<comment type="function">
    <text evidence="1">Carbohydrate-binding protein.</text>
</comment>
<comment type="function">
    <text evidence="5">(Microbial infection) Facilitates Japanese encephalitis virus infection in mosquitoes.</text>
</comment>
<comment type="subunit">
    <text evidence="1">Interacts with putative receptor-type tyrosine-protein phosphatase mosPTP-1; the interaction may mediate the recruitment of Japanese encephalitis virus particles in complex with C-type lectin mosGCTL-7 to the cell surface.</text>
</comment>
<comment type="subcellular location">
    <subcellularLocation>
        <location evidence="7">Secreted</location>
    </subcellularLocation>
</comment>
<comment type="disruption phenotype">
    <text evidence="5">(Microbial infection) RNAi-mediated knockdown results in reduced Japanese encephalitis virus infection levels.</text>
</comment>
<feature type="signal peptide" evidence="2">
    <location>
        <begin position="1"/>
        <end position="24"/>
    </location>
</feature>
<feature type="chain" id="PRO_5011408497" description="C-type lectin mosGCTL-7" evidence="2">
    <location>
        <begin position="25"/>
        <end position="173"/>
    </location>
</feature>
<feature type="domain" description="C-type lectin" evidence="3">
    <location>
        <begin position="51"/>
        <end position="167"/>
    </location>
</feature>
<feature type="glycosylation site" description="N-linked (GlcNAc...) asparagine" evidence="4">
    <location>
        <position position="119"/>
    </location>
</feature>
<feature type="glycosylation site" description="N-linked (GlcNAc...) asparagine" evidence="4">
    <location>
        <position position="144"/>
    </location>
</feature>
<feature type="disulfide bond" evidence="3">
    <location>
        <begin position="59"/>
        <end position="166"/>
    </location>
</feature>
<feature type="disulfide bond" evidence="3">
    <location>
        <begin position="139"/>
        <end position="158"/>
    </location>
</feature>
<sequence length="173" mass="19626">MVVGWSLLGWALSWLAVATVVVSAIVTVDKEALTRECDPDTPMVVPNFKANWFKATEYCHYLDRNLVIVTSAEKQEVITKVLEGTDKFGDNSFWVGGSDLAELGNFHWHSTGTRIVWHNWSELVPMPTADDPTRKDDRCVLLSNNTEMGGFKWIVVNCWDEYYFVCEKGVFAK</sequence>
<name>GCTL7_CULQU</name>
<gene>
    <name evidence="8" type="ORF">CpipJ_CPIJ009922</name>
</gene>
<keyword id="KW-1015">Disulfide bond</keyword>
<keyword id="KW-0325">Glycoprotein</keyword>
<keyword id="KW-0945">Host-virus interaction</keyword>
<keyword id="KW-0430">Lectin</keyword>
<keyword id="KW-1185">Reference proteome</keyword>
<keyword id="KW-0964">Secreted</keyword>
<keyword id="KW-0732">Signal</keyword>
<accession>B0WSV2</accession>